<accession>Q8NWR6</accession>
<organism>
    <name type="scientific">Staphylococcus aureus (strain MW2)</name>
    <dbReference type="NCBI Taxonomy" id="196620"/>
    <lineage>
        <taxon>Bacteria</taxon>
        <taxon>Bacillati</taxon>
        <taxon>Bacillota</taxon>
        <taxon>Bacilli</taxon>
        <taxon>Bacillales</taxon>
        <taxon>Staphylococcaceae</taxon>
        <taxon>Staphylococcus</taxon>
    </lineage>
</organism>
<gene>
    <name evidence="1" type="primary">odhA</name>
    <name type="ordered locus">MW1303</name>
</gene>
<sequence>MTNERKEVSEAPVNFGANLGLMLDLYDDFLQDPSSVPEDLQVLFSIIKNDDSIVPALKSTSSQNSDGTIKRVMRLIDNIRQYGHLKADIYPVNPPKRKHVPKLEIEDFDLDQQTLEGISAGIVSDHFADIYDNAYEAILRMEKRYKGPIAFEYTHINNNTERGWLKRRIETPYKVTLNNNEKRALFKQLAYVEGFEKYLHKNFVGAKRFSIEGVDALVPMLQRTITIAAKEGIKNIQIGMAHRGRLNVLTHVLEKPYEMMISEFMHTDPMKFLPEDGSLQLTAGWTGDVKYHLGGIKTTDSYGTMQRIALANNPSHLEIVAPVVEGRTRAAQDDTQRAGAPTTDHHKAMPIIIHGDAAYPGQGINFETMNLGNLKGYSTGGSLHIITNNRIGFTTEPIDARSTTYSTDVAKGYDVPIFHVNADDVEATIEAIDIAMEFRKEFHKDVVIDLVGYRRFGHNEMDEPSITNPVPYQNIRKHDSVEYVFGKKLVNEGVISEDEMHSFIEQVQKELRQAHDKINKADKMDNPDMEKPADLALPLQADEQSFTFDHLKEINDALLTYPDGFNILKKLNKVLEKRHEPFNKEDGLVDWAQAEQLAFATILQDGTPIRLTGQDSERGTFSHRHAVLHDEQTGETYTPLHHVPDQKATFDIHNSPLSEAAVVGFEYGYNVENKKSFNIWEAQYGDFANMSQMIFDNFLFSSRSKWGERSGLTLFLPHAYEGQGPEHSSARLERFLQLAAENNCTVVNLSSSSNYFHLLRAQAASLDSEQMRPLVVMSPKSLLRNKTVAKPIDEFTSGGFEPILTESYQADKVTKVILATGKMFIDLKEALAKNPDESVLLVAIERLYPFPEEEIEALLAQLPNLEEVSWVQEEPKNQGAWLYVYPYVKVLVADKYDLSYHGRIQRAAPAEGDGEIHKLVQNKIIENALKNN</sequence>
<feature type="chain" id="PRO_0000162181" description="2-oxoglutarate dehydrogenase E1 component">
    <location>
        <begin position="1"/>
        <end position="932"/>
    </location>
</feature>
<protein>
    <recommendedName>
        <fullName evidence="1">2-oxoglutarate dehydrogenase E1 component</fullName>
        <ecNumber evidence="1">1.2.4.2</ecNumber>
    </recommendedName>
    <alternativeName>
        <fullName evidence="1">Alpha-ketoglutarate dehydrogenase</fullName>
    </alternativeName>
</protein>
<reference key="1">
    <citation type="journal article" date="2002" name="Lancet">
        <title>Genome and virulence determinants of high virulence community-acquired MRSA.</title>
        <authorList>
            <person name="Baba T."/>
            <person name="Takeuchi F."/>
            <person name="Kuroda M."/>
            <person name="Yuzawa H."/>
            <person name="Aoki K."/>
            <person name="Oguchi A."/>
            <person name="Nagai Y."/>
            <person name="Iwama N."/>
            <person name="Asano K."/>
            <person name="Naimi T."/>
            <person name="Kuroda H."/>
            <person name="Cui L."/>
            <person name="Yamamoto K."/>
            <person name="Hiramatsu K."/>
        </authorList>
    </citation>
    <scope>NUCLEOTIDE SEQUENCE [LARGE SCALE GENOMIC DNA]</scope>
    <source>
        <strain>MW2</strain>
    </source>
</reference>
<proteinExistence type="inferred from homology"/>
<comment type="function">
    <text evidence="1">E1 component of the 2-oxoglutarate dehydrogenase (OGDH) complex which catalyzes the decarboxylation of 2-oxoglutarate, the first step in the conversion of 2-oxoglutarate to succinyl-CoA and CO(2).</text>
</comment>
<comment type="catalytic activity">
    <reaction evidence="1">
        <text>N(6)-[(R)-lipoyl]-L-lysyl-[protein] + 2-oxoglutarate + H(+) = N(6)-[(R)-S(8)-succinyldihydrolipoyl]-L-lysyl-[protein] + CO2</text>
        <dbReference type="Rhea" id="RHEA:12188"/>
        <dbReference type="Rhea" id="RHEA-COMP:10474"/>
        <dbReference type="Rhea" id="RHEA-COMP:20092"/>
        <dbReference type="ChEBI" id="CHEBI:15378"/>
        <dbReference type="ChEBI" id="CHEBI:16526"/>
        <dbReference type="ChEBI" id="CHEBI:16810"/>
        <dbReference type="ChEBI" id="CHEBI:83099"/>
        <dbReference type="ChEBI" id="CHEBI:83120"/>
        <dbReference type="EC" id="1.2.4.2"/>
    </reaction>
</comment>
<comment type="cofactor">
    <cofactor evidence="1">
        <name>thiamine diphosphate</name>
        <dbReference type="ChEBI" id="CHEBI:58937"/>
    </cofactor>
</comment>
<comment type="subunit">
    <text evidence="1">Homodimer. Part of the 2-oxoglutarate dehydrogenase (OGDH) complex composed of E1 (2-oxoglutarate dehydrogenase), E2 (dihydrolipoamide succinyltransferase) and E3 (dihydrolipoamide dehydrogenase); the complex contains multiple copies of the three enzymatic components (E1, E2 and E3).</text>
</comment>
<comment type="similarity">
    <text evidence="1">Belongs to the alpha-ketoglutarate dehydrogenase family.</text>
</comment>
<evidence type="ECO:0000255" key="1">
    <source>
        <dbReference type="HAMAP-Rule" id="MF_01169"/>
    </source>
</evidence>
<keyword id="KW-0324">Glycolysis</keyword>
<keyword id="KW-0560">Oxidoreductase</keyword>
<keyword id="KW-0786">Thiamine pyrophosphate</keyword>
<name>ODO1_STAAW</name>
<dbReference type="EC" id="1.2.4.2" evidence="1"/>
<dbReference type="EMBL" id="BA000033">
    <property type="protein sequence ID" value="BAB95168.1"/>
    <property type="molecule type" value="Genomic_DNA"/>
</dbReference>
<dbReference type="RefSeq" id="WP_000180650.1">
    <property type="nucleotide sequence ID" value="NC_003923.1"/>
</dbReference>
<dbReference type="SMR" id="Q8NWR6"/>
<dbReference type="KEGG" id="sam:MW1303"/>
<dbReference type="HOGENOM" id="CLU_004709_1_0_9"/>
<dbReference type="GO" id="GO:0005829">
    <property type="term" value="C:cytosol"/>
    <property type="evidence" value="ECO:0007669"/>
    <property type="project" value="TreeGrafter"/>
</dbReference>
<dbReference type="GO" id="GO:0045252">
    <property type="term" value="C:oxoglutarate dehydrogenase complex"/>
    <property type="evidence" value="ECO:0007669"/>
    <property type="project" value="TreeGrafter"/>
</dbReference>
<dbReference type="GO" id="GO:0004591">
    <property type="term" value="F:oxoglutarate dehydrogenase (succinyl-transferring) activity"/>
    <property type="evidence" value="ECO:0007669"/>
    <property type="project" value="UniProtKB-UniRule"/>
</dbReference>
<dbReference type="GO" id="GO:0030976">
    <property type="term" value="F:thiamine pyrophosphate binding"/>
    <property type="evidence" value="ECO:0007669"/>
    <property type="project" value="UniProtKB-UniRule"/>
</dbReference>
<dbReference type="GO" id="GO:0006096">
    <property type="term" value="P:glycolytic process"/>
    <property type="evidence" value="ECO:0007669"/>
    <property type="project" value="UniProtKB-UniRule"/>
</dbReference>
<dbReference type="GO" id="GO:0006099">
    <property type="term" value="P:tricarboxylic acid cycle"/>
    <property type="evidence" value="ECO:0007669"/>
    <property type="project" value="TreeGrafter"/>
</dbReference>
<dbReference type="CDD" id="cd02016">
    <property type="entry name" value="TPP_E1_OGDC_like"/>
    <property type="match status" value="1"/>
</dbReference>
<dbReference type="FunFam" id="3.40.50.11610:FF:000002">
    <property type="entry name" value="2-oxoglutarate dehydrogenase E1 component"/>
    <property type="match status" value="1"/>
</dbReference>
<dbReference type="FunFam" id="3.40.50.970:FF:000036">
    <property type="entry name" value="2-oxoglutarate dehydrogenase E1 component"/>
    <property type="match status" value="1"/>
</dbReference>
<dbReference type="Gene3D" id="3.40.50.12470">
    <property type="match status" value="1"/>
</dbReference>
<dbReference type="Gene3D" id="3.40.50.970">
    <property type="match status" value="1"/>
</dbReference>
<dbReference type="Gene3D" id="3.40.50.11610">
    <property type="entry name" value="Multifunctional 2-oxoglutarate metabolism enzyme, C-terminal domain"/>
    <property type="match status" value="1"/>
</dbReference>
<dbReference type="Gene3D" id="1.10.287.1150">
    <property type="entry name" value="TPP helical domain"/>
    <property type="match status" value="1"/>
</dbReference>
<dbReference type="HAMAP" id="MF_01169">
    <property type="entry name" value="SucA_OdhA"/>
    <property type="match status" value="1"/>
</dbReference>
<dbReference type="InterPro" id="IPR011603">
    <property type="entry name" value="2oxoglutarate_DH_E1"/>
</dbReference>
<dbReference type="InterPro" id="IPR023784">
    <property type="entry name" value="2oxoglutarate_DH_E1_bac"/>
</dbReference>
<dbReference type="InterPro" id="IPR001017">
    <property type="entry name" value="DH_E1"/>
</dbReference>
<dbReference type="InterPro" id="IPR042179">
    <property type="entry name" value="KGD_C_sf"/>
</dbReference>
<dbReference type="InterPro" id="IPR031717">
    <property type="entry name" value="ODO-1/KGD_C"/>
</dbReference>
<dbReference type="InterPro" id="IPR029061">
    <property type="entry name" value="THDP-binding"/>
</dbReference>
<dbReference type="InterPro" id="IPR005475">
    <property type="entry name" value="Transketolase-like_Pyr-bd"/>
</dbReference>
<dbReference type="NCBIfam" id="TIGR00239">
    <property type="entry name" value="2oxo_dh_E1"/>
    <property type="match status" value="1"/>
</dbReference>
<dbReference type="NCBIfam" id="NF006914">
    <property type="entry name" value="PRK09404.1"/>
    <property type="match status" value="1"/>
</dbReference>
<dbReference type="NCBIfam" id="NF008907">
    <property type="entry name" value="PRK12270.1"/>
    <property type="match status" value="1"/>
</dbReference>
<dbReference type="PANTHER" id="PTHR23152:SF4">
    <property type="entry name" value="2-OXOADIPATE DEHYDROGENASE COMPLEX COMPONENT E1"/>
    <property type="match status" value="1"/>
</dbReference>
<dbReference type="PANTHER" id="PTHR23152">
    <property type="entry name" value="2-OXOGLUTARATE DEHYDROGENASE"/>
    <property type="match status" value="1"/>
</dbReference>
<dbReference type="Pfam" id="PF00676">
    <property type="entry name" value="E1_dh"/>
    <property type="match status" value="1"/>
</dbReference>
<dbReference type="Pfam" id="PF16870">
    <property type="entry name" value="OxoGdeHyase_C"/>
    <property type="match status" value="1"/>
</dbReference>
<dbReference type="Pfam" id="PF02779">
    <property type="entry name" value="Transket_pyr"/>
    <property type="match status" value="1"/>
</dbReference>
<dbReference type="PIRSF" id="PIRSF000157">
    <property type="entry name" value="Oxoglu_dh_E1"/>
    <property type="match status" value="1"/>
</dbReference>
<dbReference type="SMART" id="SM00861">
    <property type="entry name" value="Transket_pyr"/>
    <property type="match status" value="1"/>
</dbReference>
<dbReference type="SUPFAM" id="SSF52518">
    <property type="entry name" value="Thiamin diphosphate-binding fold (THDP-binding)"/>
    <property type="match status" value="2"/>
</dbReference>